<keyword id="KW-0217">Developmental protein</keyword>
<keyword id="KW-0238">DNA-binding</keyword>
<keyword id="KW-0371">Homeobox</keyword>
<keyword id="KW-0539">Nucleus</keyword>
<keyword id="KW-1185">Reference proteome</keyword>
<protein>
    <recommendedName>
        <fullName evidence="9">Transcription factor LBX2</fullName>
    </recommendedName>
    <alternativeName>
        <fullName evidence="1">Ladybird homeobox 2</fullName>
    </alternativeName>
    <alternativeName>
        <fullName>Ladybird homeobox protein homolog 2</fullName>
    </alternativeName>
</protein>
<evidence type="ECO:0000250" key="1">
    <source>
        <dbReference type="UniProtKB" id="Q6XYB7"/>
    </source>
</evidence>
<evidence type="ECO:0000250" key="2">
    <source>
        <dbReference type="UniProtKB" id="Q9WUN8"/>
    </source>
</evidence>
<evidence type="ECO:0000255" key="3">
    <source>
        <dbReference type="PROSITE-ProRule" id="PRU00108"/>
    </source>
</evidence>
<evidence type="ECO:0000256" key="4">
    <source>
        <dbReference type="SAM" id="MobiDB-lite"/>
    </source>
</evidence>
<evidence type="ECO:0000269" key="5">
    <source>
    </source>
</evidence>
<evidence type="ECO:0000269" key="6">
    <source>
    </source>
</evidence>
<evidence type="ECO:0000269" key="7">
    <source>
    </source>
</evidence>
<evidence type="ECO:0000269" key="8">
    <source>
    </source>
</evidence>
<evidence type="ECO:0000303" key="9">
    <source>
    </source>
</evidence>
<evidence type="ECO:0000305" key="10"/>
<evidence type="ECO:0000312" key="11">
    <source>
        <dbReference type="Proteomes" id="UP000000437"/>
    </source>
</evidence>
<evidence type="ECO:0000312" key="12">
    <source>
        <dbReference type="ZFIN" id="ZDB-GENE-001206-2"/>
    </source>
</evidence>
<organism evidence="11">
    <name type="scientific">Danio rerio</name>
    <name type="common">Zebrafish</name>
    <name type="synonym">Brachydanio rerio</name>
    <dbReference type="NCBI Taxonomy" id="7955"/>
    <lineage>
        <taxon>Eukaryota</taxon>
        <taxon>Metazoa</taxon>
        <taxon>Chordata</taxon>
        <taxon>Craniata</taxon>
        <taxon>Vertebrata</taxon>
        <taxon>Euteleostomi</taxon>
        <taxon>Actinopterygii</taxon>
        <taxon>Neopterygii</taxon>
        <taxon>Teleostei</taxon>
        <taxon>Ostariophysi</taxon>
        <taxon>Cypriniformes</taxon>
        <taxon>Danionidae</taxon>
        <taxon>Danioninae</taxon>
        <taxon>Danio</taxon>
    </lineage>
</organism>
<accession>Q804R0</accession>
<feature type="chain" id="PRO_0000451740" description="Transcription factor LBX2">
    <location>
        <begin position="1"/>
        <end position="257"/>
    </location>
</feature>
<feature type="DNA-binding region" description="Homeobox" evidence="3">
    <location>
        <begin position="126"/>
        <end position="185"/>
    </location>
</feature>
<feature type="region of interest" description="Required for convergent extension movement and hypaxial myogenesis during gastrulation. Required for the formation of thick and thin myofilaments. Required for myod1 expression in the pectoral fin bud. Required for continuous expression of cxcl12a in the posterior lateral mesoderm at the tail bud stage and in adaxial cells at the 10-somite stage" evidence="5 6 7">
    <location>
        <begin position="1"/>
        <end position="46"/>
    </location>
</feature>
<feature type="region of interest" description="Disordered" evidence="4">
    <location>
        <begin position="1"/>
        <end position="43"/>
    </location>
</feature>
<feature type="region of interest" description="Disordered" evidence="4">
    <location>
        <begin position="206"/>
        <end position="257"/>
    </location>
</feature>
<feature type="compositionally biased region" description="Polar residues" evidence="4">
    <location>
        <begin position="233"/>
        <end position="243"/>
    </location>
</feature>
<feature type="compositionally biased region" description="Acidic residues" evidence="4">
    <location>
        <begin position="245"/>
        <end position="257"/>
    </location>
</feature>
<feature type="mutagenesis site" description="Abolishes maternal ctnnb1 signaling resulting in a loss of chd expression." evidence="8">
    <original>FSIEDIL</original>
    <variation>ICLQEFI</variation>
    <location>
        <begin position="42"/>
        <end position="48"/>
    </location>
</feature>
<reference evidence="11" key="1">
    <citation type="submission" date="2004-07" db="EMBL/GenBank/DDBJ databases">
        <authorList>
            <consortium name="NIH - Zebrafish Gene Collection (ZGC) project"/>
        </authorList>
    </citation>
    <scope>NUCLEOTIDE SEQUENCE [LARGE SCALE MRNA]</scope>
</reference>
<reference evidence="11" key="2">
    <citation type="journal article" date="2013" name="Nature">
        <title>The zebrafish reference genome sequence and its relationship to the human genome.</title>
        <authorList>
            <person name="Howe K."/>
            <person name="Clark M.D."/>
            <person name="Torroja C.F."/>
            <person name="Torrance J."/>
            <person name="Berthelot C."/>
            <person name="Muffato M."/>
            <person name="Collins J.E."/>
            <person name="Humphray S."/>
            <person name="McLaren K."/>
            <person name="Matthews L."/>
            <person name="McLaren S."/>
            <person name="Sealy I."/>
            <person name="Caccamo M."/>
            <person name="Churcher C."/>
            <person name="Scott C."/>
            <person name="Barrett J.C."/>
            <person name="Koch R."/>
            <person name="Rauch G.J."/>
            <person name="White S."/>
            <person name="Chow W."/>
            <person name="Kilian B."/>
            <person name="Quintais L.T."/>
            <person name="Guerra-Assuncao J.A."/>
            <person name="Zhou Y."/>
            <person name="Gu Y."/>
            <person name="Yen J."/>
            <person name="Vogel J.H."/>
            <person name="Eyre T."/>
            <person name="Redmond S."/>
            <person name="Banerjee R."/>
            <person name="Chi J."/>
            <person name="Fu B."/>
            <person name="Langley E."/>
            <person name="Maguire S.F."/>
            <person name="Laird G.K."/>
            <person name="Lloyd D."/>
            <person name="Kenyon E."/>
            <person name="Donaldson S."/>
            <person name="Sehra H."/>
            <person name="Almeida-King J."/>
            <person name="Loveland J."/>
            <person name="Trevanion S."/>
            <person name="Jones M."/>
            <person name="Quail M."/>
            <person name="Willey D."/>
            <person name="Hunt A."/>
            <person name="Burton J."/>
            <person name="Sims S."/>
            <person name="McLay K."/>
            <person name="Plumb B."/>
            <person name="Davis J."/>
            <person name="Clee C."/>
            <person name="Oliver K."/>
            <person name="Clark R."/>
            <person name="Riddle C."/>
            <person name="Elliot D."/>
            <person name="Threadgold G."/>
            <person name="Harden G."/>
            <person name="Ware D."/>
            <person name="Begum S."/>
            <person name="Mortimore B."/>
            <person name="Kerry G."/>
            <person name="Heath P."/>
            <person name="Phillimore B."/>
            <person name="Tracey A."/>
            <person name="Corby N."/>
            <person name="Dunn M."/>
            <person name="Johnson C."/>
            <person name="Wood J."/>
            <person name="Clark S."/>
            <person name="Pelan S."/>
            <person name="Griffiths G."/>
            <person name="Smith M."/>
            <person name="Glithero R."/>
            <person name="Howden P."/>
            <person name="Barker N."/>
            <person name="Lloyd C."/>
            <person name="Stevens C."/>
            <person name="Harley J."/>
            <person name="Holt K."/>
            <person name="Panagiotidis G."/>
            <person name="Lovell J."/>
            <person name="Beasley H."/>
            <person name="Henderson C."/>
            <person name="Gordon D."/>
            <person name="Auger K."/>
            <person name="Wright D."/>
            <person name="Collins J."/>
            <person name="Raisen C."/>
            <person name="Dyer L."/>
            <person name="Leung K."/>
            <person name="Robertson L."/>
            <person name="Ambridge K."/>
            <person name="Leongamornlert D."/>
            <person name="McGuire S."/>
            <person name="Gilderthorp R."/>
            <person name="Griffiths C."/>
            <person name="Manthravadi D."/>
            <person name="Nichol S."/>
            <person name="Barker G."/>
            <person name="Whitehead S."/>
            <person name="Kay M."/>
            <person name="Brown J."/>
            <person name="Murnane C."/>
            <person name="Gray E."/>
            <person name="Humphries M."/>
            <person name="Sycamore N."/>
            <person name="Barker D."/>
            <person name="Saunders D."/>
            <person name="Wallis J."/>
            <person name="Babbage A."/>
            <person name="Hammond S."/>
            <person name="Mashreghi-Mohammadi M."/>
            <person name="Barr L."/>
            <person name="Martin S."/>
            <person name="Wray P."/>
            <person name="Ellington A."/>
            <person name="Matthews N."/>
            <person name="Ellwood M."/>
            <person name="Woodmansey R."/>
            <person name="Clark G."/>
            <person name="Cooper J."/>
            <person name="Tromans A."/>
            <person name="Grafham D."/>
            <person name="Skuce C."/>
            <person name="Pandian R."/>
            <person name="Andrews R."/>
            <person name="Harrison E."/>
            <person name="Kimberley A."/>
            <person name="Garnett J."/>
            <person name="Fosker N."/>
            <person name="Hall R."/>
            <person name="Garner P."/>
            <person name="Kelly D."/>
            <person name="Bird C."/>
            <person name="Palmer S."/>
            <person name="Gehring I."/>
            <person name="Berger A."/>
            <person name="Dooley C.M."/>
            <person name="Ersan-Urun Z."/>
            <person name="Eser C."/>
            <person name="Geiger H."/>
            <person name="Geisler M."/>
            <person name="Karotki L."/>
            <person name="Kirn A."/>
            <person name="Konantz J."/>
            <person name="Konantz M."/>
            <person name="Oberlander M."/>
            <person name="Rudolph-Geiger S."/>
            <person name="Teucke M."/>
            <person name="Lanz C."/>
            <person name="Raddatz G."/>
            <person name="Osoegawa K."/>
            <person name="Zhu B."/>
            <person name="Rapp A."/>
            <person name="Widaa S."/>
            <person name="Langford C."/>
            <person name="Yang F."/>
            <person name="Schuster S.C."/>
            <person name="Carter N.P."/>
            <person name="Harrow J."/>
            <person name="Ning Z."/>
            <person name="Herrero J."/>
            <person name="Searle S.M."/>
            <person name="Enright A."/>
            <person name="Geisler R."/>
            <person name="Plasterk R.H."/>
            <person name="Lee C."/>
            <person name="Westerfield M."/>
            <person name="de Jong P.J."/>
            <person name="Zon L.I."/>
            <person name="Postlethwait J.H."/>
            <person name="Nusslein-Volhard C."/>
            <person name="Hubbard T.J."/>
            <person name="Roest Crollius H."/>
            <person name="Rogers J."/>
            <person name="Stemple D.L."/>
        </authorList>
    </citation>
    <scope>NUCLEOTIDE SEQUENCE [LARGE SCALE GENOMIC DNA]</scope>
    <source>
        <strain evidence="11">Tuebingen</strain>
    </source>
</reference>
<reference evidence="10" key="3">
    <citation type="journal article" date="2009" name="BMC Dev. Biol.">
        <title>Lbx2 regulates formation of myofibrils.</title>
        <authorList>
            <person name="Ochi H."/>
            <person name="Westerfield M."/>
        </authorList>
    </citation>
    <scope>FUNCTION</scope>
    <scope>DEVELOPMENTAL STAGE</scope>
    <scope>DISRUPTION PHENOTYPE</scope>
</reference>
<reference evidence="10" key="4">
    <citation type="journal article" date="2011" name="PLoS ONE">
        <title>Role of zebrafish lbx2 in embryonic lateral line development.</title>
        <authorList>
            <person name="Chen X."/>
            <person name="Lou Q."/>
            <person name="He J."/>
            <person name="Yin Z."/>
        </authorList>
    </citation>
    <scope>FUNCTION</scope>
    <scope>DEVELOPMENTAL STAGE</scope>
    <scope>DISRUPTION PHENOTYPE</scope>
</reference>
<reference evidence="10" key="5">
    <citation type="journal article" date="2012" name="Biochim. Biophys. Acta">
        <title>Role of lbx2 in the noncanonical Wnt signaling pathway for convergence and extension movements and hypaxial myogenesis in zebrafish.</title>
        <authorList>
            <person name="Lou Q."/>
            <person name="He J."/>
            <person name="Hu L."/>
            <person name="Yin Z."/>
        </authorList>
    </citation>
    <scope>FUNCTION</scope>
    <scope>DEVELOPMENTAL STAGE</scope>
    <scope>DISRUPTION PHENOTYPE</scope>
</reference>
<reference evidence="10" key="6">
    <citation type="journal article" date="2014" name="Nat. Commun.">
        <title>Tissue-specific derepression of TCF/LEF controls the activity of the Wnt/beta-catenin pathway.</title>
        <authorList>
            <person name="Lu F.I."/>
            <person name="Sun Y.H."/>
            <person name="Wei C.Y."/>
            <person name="Thisse C."/>
            <person name="Thisse B."/>
        </authorList>
    </citation>
    <scope>FUNCTION</scope>
    <scope>INTERACTION WITH TLE3A</scope>
    <scope>DEVELOPMENTAL STAGE</scope>
    <scope>MUTAGENESIS OF 42-PHE--LEU-48</scope>
</reference>
<gene>
    <name evidence="12" type="primary">lbx2</name>
    <name evidence="2" type="synonym">Lbx2h</name>
</gene>
<name>LBX2_DANRE</name>
<dbReference type="EMBL" id="AL831789">
    <property type="status" value="NOT_ANNOTATED_CDS"/>
    <property type="molecule type" value="Genomic_DNA"/>
</dbReference>
<dbReference type="EMBL" id="BC075912">
    <property type="protein sequence ID" value="AAH75912.1"/>
    <property type="molecule type" value="mRNA"/>
</dbReference>
<dbReference type="RefSeq" id="NP_001007135.1">
    <property type="nucleotide sequence ID" value="NM_001007134.1"/>
</dbReference>
<dbReference type="SMR" id="Q804R0"/>
<dbReference type="FunCoup" id="Q804R0">
    <property type="interactions" value="2"/>
</dbReference>
<dbReference type="STRING" id="7955.ENSDARP00000029690"/>
<dbReference type="PaxDb" id="7955-ENSDARP00000029690"/>
<dbReference type="Ensembl" id="ENSDART00000031508">
    <property type="protein sequence ID" value="ENSDARP00000029690"/>
    <property type="gene ID" value="ENSDARG00000025131"/>
</dbReference>
<dbReference type="Ensembl" id="ENSDART00000187825">
    <property type="protein sequence ID" value="ENSDARP00000153066"/>
    <property type="gene ID" value="ENSDARG00000025131"/>
</dbReference>
<dbReference type="GeneID" id="64276"/>
<dbReference type="KEGG" id="dre:64276"/>
<dbReference type="AGR" id="ZFIN:ZDB-GENE-001206-2"/>
<dbReference type="CTD" id="85474"/>
<dbReference type="ZFIN" id="ZDB-GENE-001206-2">
    <property type="gene designation" value="lbx2"/>
</dbReference>
<dbReference type="eggNOG" id="KOG0488">
    <property type="taxonomic scope" value="Eukaryota"/>
</dbReference>
<dbReference type="HOGENOM" id="CLU_086390_0_0_1"/>
<dbReference type="InParanoid" id="Q804R0"/>
<dbReference type="OMA" id="ICPARVL"/>
<dbReference type="OrthoDB" id="6159439at2759"/>
<dbReference type="PhylomeDB" id="Q804R0"/>
<dbReference type="TreeFam" id="TF325047"/>
<dbReference type="PRO" id="PR:Q804R0"/>
<dbReference type="Proteomes" id="UP000000437">
    <property type="component" value="Chromosome 14"/>
</dbReference>
<dbReference type="Bgee" id="ENSDARG00000025131">
    <property type="expression patterns" value="Expressed in presumptive paraxial mesoderm and 37 other cell types or tissues"/>
</dbReference>
<dbReference type="GO" id="GO:0005634">
    <property type="term" value="C:nucleus"/>
    <property type="evidence" value="ECO:0000318"/>
    <property type="project" value="GO_Central"/>
</dbReference>
<dbReference type="GO" id="GO:0000981">
    <property type="term" value="F:DNA-binding transcription factor activity, RNA polymerase II-specific"/>
    <property type="evidence" value="ECO:0000318"/>
    <property type="project" value="GO_Central"/>
</dbReference>
<dbReference type="GO" id="GO:1990837">
    <property type="term" value="F:sequence-specific double-stranded DNA binding"/>
    <property type="evidence" value="ECO:0000318"/>
    <property type="project" value="GO_Central"/>
</dbReference>
<dbReference type="GO" id="GO:0000578">
    <property type="term" value="P:embryonic axis specification"/>
    <property type="evidence" value="ECO:0000315"/>
    <property type="project" value="UniProtKB"/>
</dbReference>
<dbReference type="GO" id="GO:0055001">
    <property type="term" value="P:muscle cell development"/>
    <property type="evidence" value="ECO:0000315"/>
    <property type="project" value="ZFIN"/>
</dbReference>
<dbReference type="GO" id="GO:0042692">
    <property type="term" value="P:muscle cell differentiation"/>
    <property type="evidence" value="ECO:0000315"/>
    <property type="project" value="UniProtKB"/>
</dbReference>
<dbReference type="GO" id="GO:1904105">
    <property type="term" value="P:positive regulation of convergent extension involved in gastrulation"/>
    <property type="evidence" value="ECO:0000315"/>
    <property type="project" value="UniProtKB"/>
</dbReference>
<dbReference type="GO" id="GO:2000052">
    <property type="term" value="P:positive regulation of non-canonical Wnt signaling pathway"/>
    <property type="evidence" value="ECO:0000315"/>
    <property type="project" value="UniProtKB"/>
</dbReference>
<dbReference type="GO" id="GO:0048922">
    <property type="term" value="P:posterior lateral line neuromast deposition"/>
    <property type="evidence" value="ECO:0000315"/>
    <property type="project" value="UniProtKB"/>
</dbReference>
<dbReference type="GO" id="GO:0048920">
    <property type="term" value="P:posterior lateral line neuromast primordium migration"/>
    <property type="evidence" value="ECO:0000315"/>
    <property type="project" value="UniProtKB"/>
</dbReference>
<dbReference type="GO" id="GO:0060828">
    <property type="term" value="P:regulation of canonical Wnt signaling pathway"/>
    <property type="evidence" value="ECO:0000315"/>
    <property type="project" value="ZFIN"/>
</dbReference>
<dbReference type="GO" id="GO:0006357">
    <property type="term" value="P:regulation of transcription by RNA polymerase II"/>
    <property type="evidence" value="ECO:0000318"/>
    <property type="project" value="GO_Central"/>
</dbReference>
<dbReference type="CDD" id="cd00086">
    <property type="entry name" value="homeodomain"/>
    <property type="match status" value="1"/>
</dbReference>
<dbReference type="FunFam" id="1.10.10.60:FF:000098">
    <property type="entry name" value="Transcription factor LBX1"/>
    <property type="match status" value="1"/>
</dbReference>
<dbReference type="Gene3D" id="1.10.10.60">
    <property type="entry name" value="Homeodomain-like"/>
    <property type="match status" value="1"/>
</dbReference>
<dbReference type="InterPro" id="IPR001356">
    <property type="entry name" value="HD"/>
</dbReference>
<dbReference type="InterPro" id="IPR017970">
    <property type="entry name" value="Homeobox_CS"/>
</dbReference>
<dbReference type="InterPro" id="IPR009057">
    <property type="entry name" value="Homeodomain-like_sf"/>
</dbReference>
<dbReference type="InterPro" id="IPR000047">
    <property type="entry name" value="HTH_motif"/>
</dbReference>
<dbReference type="InterPro" id="IPR051892">
    <property type="entry name" value="LBX_TF"/>
</dbReference>
<dbReference type="PANTHER" id="PTHR24336">
    <property type="entry name" value="TRANSCRIPTION FACTOR LBX"/>
    <property type="match status" value="1"/>
</dbReference>
<dbReference type="PANTHER" id="PTHR24336:SF12">
    <property type="entry name" value="TRANSCRIPTION FACTOR LBX2"/>
    <property type="match status" value="1"/>
</dbReference>
<dbReference type="Pfam" id="PF00046">
    <property type="entry name" value="Homeodomain"/>
    <property type="match status" value="1"/>
</dbReference>
<dbReference type="PRINTS" id="PR00031">
    <property type="entry name" value="HTHREPRESSR"/>
</dbReference>
<dbReference type="SMART" id="SM00389">
    <property type="entry name" value="HOX"/>
    <property type="match status" value="1"/>
</dbReference>
<dbReference type="SUPFAM" id="SSF46689">
    <property type="entry name" value="Homeodomain-like"/>
    <property type="match status" value="1"/>
</dbReference>
<dbReference type="PROSITE" id="PS00027">
    <property type="entry name" value="HOMEOBOX_1"/>
    <property type="match status" value="1"/>
</dbReference>
<dbReference type="PROSITE" id="PS50071">
    <property type="entry name" value="HOMEOBOX_2"/>
    <property type="match status" value="1"/>
</dbReference>
<comment type="function">
    <text evidence="5 6 7 8">Transcription factor required in several developmental processes (PubMed:19216761, PubMed:22216300, PubMed:25371059). Involved in axis formation during embryonic development by inhibiting tle3a/gro2 from binding to tcf7l1a, thereby facilitating ctnnb1-mediated transcription of canonical Wnt/CTNNB1 signaling target genes (PubMed:25371059). Regulates convergent extension movements and hypaxial myogenesis during gastrulation by activating non-canonical Wnt signaling via wnt5b (PubMed:19216761, PubMed:22406073). Required for the formation of myofibrils and fusion of fast muscle precursor cells, potentially via transcriptional regulation of genes specific to thick and thin myofilaments (PubMed:19216761). Regulates the migration of the posterior lateral line primordium during embryonic development, possibly via regulation of cxcl12a/sdf1a expression in the posterior lateral mesoderm, thereby modulating the deposition of neuromasts at correct intervals (PubMed:22216300).</text>
</comment>
<comment type="subunit">
    <text evidence="8">Interacts (via N-terminus) with tle3a/gro2 (via C-terminus).</text>
</comment>
<comment type="subcellular location">
    <subcellularLocation>
        <location evidence="3">Nucleus</location>
    </subcellularLocation>
</comment>
<comment type="developmental stage">
    <text evidence="5 6 7 8">Expressed in the germ ring at the blastoderm margin during the shield stage and when embryo reaches 80% epiboly stage of gastrulation, expression is higher dorsally than ventrally (PubMed:19216761, PubMed:22406073). Expressed in the paraxial mesoderm, posterior lateral mesoderm and adaxial cells at the end of the bud stage (PubMed:19216761, PubMed:22216300). Expressed in the segmental plate and ventral mesoderm during early gastrulation and early somitogenesis (PubMed:25371059). Expressed at the posterior dorsal midline at the three-somite stage and extends to the anterior region along the notochord, and to the trunk somites and cells lateral to them in the 24 hours post-fertilization (hpf) (PubMed:22406073). Expressed in both dorsal and ventral fast muscle cells in the late stages of segmentation (PubMed:19216761). Expressed in the hindbrain, a subpopulation of spinal cord interneurons, hypaxial muscles and in migrating muscle cells giving rise to the hyoid muscles and pectoral fin muscles at 24 hpf (PubMed:25371059). Expressed in the neural tube and hindbrain at 36 and 48 hpf with additional expression in the pectoral fin bud and fin muscles at 48 hpf (PubMed:19216761, PubMed:22406073). Expression is lost from the trunk at 48 hpf (PubMed:19216761).</text>
</comment>
<comment type="disruption phenotype">
    <text evidence="5 6 7">Morpholino knockdown results in circling swimming behavior at the larval stage (PubMed:22216300). Reduced fin bud formation and loss of myod1 expression in embryo hyoid muscles (PubMed:19216761, PubMed:22216300, PubMed:22406073). Disruption of cuboidal morphology of adaxial cell pseudo-epithelium, and failure of myod1-expressing cells to incorporate into the adaxial cell layer (PubMed:19216761). Slow muscle fibers are abnormally shaped at 24 hpf and 48 hpf and fast muscle cells form shorter myofibrils at 24 hpf and 48 hpf, in addition unfused fast muscles cells are present at 48 hpf (PubMed:19216761). Reduced expression of thin filament genes in skeletal muscles and thick filament genes in embryos (PubMed:19216761). Weak and discontinuous pattern of cxcl12a/sdf1a expression just before the posterior lateral line (PLL) begins to migrate in the posterior lateral mesoderm at the tail bud stage, and in adaxial cells at the 10-somite stage (PubMed:22216300). Disruption of myoseptum distribution as a result of abnormal differentiation of cxcl12a/sdf1a-expressing cells in the horizontal myoseptum at 24 hpf (PubMed:22216300). Increase in cell death rate in the PLL primordium and deposited neuromasts at 36 hpf (PubMed:22216300). Decrease in the number of PLL neuromasts with 15% of morphants showing complete loss of neuromasts at 48 hpf (PubMed:22216300). The speed of PLL primordium migration is reduced and neuromasts are deposited at inappropriate locations along the length of the posteriorly extending primordium (PubMed:22216300). Disruption of the discrete dorsoventral domains resulting in narrowing of the mediolateral region and slower extension of the expression domains towards the dorsal region at the shield stage (PubMed:22406073). Abnormal anterior-posterior axis, reduced dorsalward movement speed of lateral marginal cells and reduced wnt5b expression at the end of gastrulation. Embryos have a broader neural plate in the neuroectoderm with shorter and broader notochords, and reduced cell elongation (PubMed:22406073).</text>
</comment>
<proteinExistence type="evidence at protein level"/>
<sequence length="257" mass="28367">MTSSSKDMKAGSVLQSSGEERRRGPLDQLPPPANSNKPLTPFSIEDILNKPSVKKSVGSLCPPRVLEKVTGSSASRNGISAPSSPLCALEELASKTFKGLEVSVIQAAEGREHINAFGQRQASKKRRKSRTAFTNHQIYELEKRFLYQKYLSPADRDQIAQQLGLTNAQVITWFQNRRAKLKRDLEEMKADVESLKKIPPQALQKLVSMEDMEDAHGGSGPISPSLSPRAFPQSPSSSRGQTTDEFSEEDEEIEVDD</sequence>